<comment type="function">
    <text evidence="1">Acts in a DNA repair pathway for removal of UV-induced DNA damage that is distinct from classical nucleotide excision repair and in repair of ionizing radiation damage. Functions in homologous recombination repair of DNA double strand breaks and in recovery of stalled replication forks. Plays a critical role in meiosis.</text>
</comment>
<comment type="subunit">
    <text>Two subcomplexes smc5-smc6-nse2 and nse1-nse3-nse4 exist. These subcomplexes are then brought together via a number of interactions, forming the Smc5-Smc6 complex.</text>
</comment>
<comment type="interaction">
    <interactant intactId="EBI-605484">
        <id>Q6BDR8</id>
    </interactant>
    <interactant intactId="EBI-605440">
        <id>Q53EK2</id>
        <label>nse1</label>
    </interactant>
    <organismsDiffer>false</organismsDiffer>
    <experiments>5</experiments>
</comment>
<comment type="interaction">
    <interactant intactId="EBI-605484">
        <id>Q6BDR8</id>
    </interactant>
    <interactant intactId="EBI-605466">
        <id>Q9Y7U4</id>
        <label>nse3</label>
    </interactant>
    <organismsDiffer>false</organismsDiffer>
    <experiments>7</experiments>
</comment>
<comment type="interaction">
    <interactant intactId="EBI-605484">
        <id>Q6BDR8</id>
    </interactant>
    <interactant intactId="EBI-603756">
        <id>O13710</id>
        <label>smc5</label>
    </interactant>
    <organismsDiffer>false</organismsDiffer>
    <experiments>5</experiments>
</comment>
<comment type="interaction">
    <interactant intactId="EBI-605484">
        <id>Q6BDR8</id>
    </interactant>
    <interactant intactId="EBI-603745">
        <id>P53692</id>
        <label>smc6</label>
    </interactant>
    <organismsDiffer>false</organismsDiffer>
    <experiments>4</experiments>
</comment>
<comment type="subcellular location">
    <subcellularLocation>
        <location evidence="1">Nucleus</location>
    </subcellularLocation>
</comment>
<comment type="similarity">
    <text evidence="2">Belongs to the NSE4 family.</text>
</comment>
<gene>
    <name type="primary">nse4</name>
    <name type="synonym">rad62</name>
    <name type="ORF">SPBC20F10.04c</name>
</gene>
<accession>Q6BDR8</accession>
<evidence type="ECO:0000269" key="1">
    <source>
    </source>
</evidence>
<evidence type="ECO:0000305" key="2"/>
<name>NSE4_SCHPO</name>
<proteinExistence type="evidence at protein level"/>
<keyword id="KW-0903">Direct protein sequencing</keyword>
<keyword id="KW-0227">DNA damage</keyword>
<keyword id="KW-0233">DNA recombination</keyword>
<keyword id="KW-0234">DNA repair</keyword>
<keyword id="KW-0469">Meiosis</keyword>
<keyword id="KW-0539">Nucleus</keyword>
<keyword id="KW-1185">Reference proteome</keyword>
<dbReference type="EMBL" id="AB158548">
    <property type="protein sequence ID" value="BAD34600.1"/>
    <property type="molecule type" value="Genomic_DNA"/>
</dbReference>
<dbReference type="EMBL" id="CU329671">
    <property type="protein sequence ID" value="CAH17526.1"/>
    <property type="molecule type" value="Genomic_DNA"/>
</dbReference>
<dbReference type="RefSeq" id="NP_001018837.1">
    <property type="nucleotide sequence ID" value="NM_001022289.2"/>
</dbReference>
<dbReference type="SMR" id="Q6BDR8"/>
<dbReference type="BioGRID" id="280406">
    <property type="interactions" value="17"/>
</dbReference>
<dbReference type="ComplexPortal" id="CPX-25736">
    <property type="entry name" value="SMC5-SMC6 SUMO ligase complex"/>
</dbReference>
<dbReference type="FunCoup" id="Q6BDR8">
    <property type="interactions" value="278"/>
</dbReference>
<dbReference type="IntAct" id="Q6BDR8">
    <property type="interactions" value="7"/>
</dbReference>
<dbReference type="STRING" id="284812.Q6BDR8"/>
<dbReference type="iPTMnet" id="Q6BDR8"/>
<dbReference type="PaxDb" id="4896-SPBC20F10.04c.1"/>
<dbReference type="EnsemblFungi" id="SPBC20F10.04c.1">
    <property type="protein sequence ID" value="SPBC20F10.04c.1:pep"/>
    <property type="gene ID" value="SPBC20F10.04c"/>
</dbReference>
<dbReference type="GeneID" id="3361330"/>
<dbReference type="KEGG" id="spo:3361330"/>
<dbReference type="PomBase" id="SPBC20F10.04c">
    <property type="gene designation" value="nse4"/>
</dbReference>
<dbReference type="VEuPathDB" id="FungiDB:SPBC20F10.04c"/>
<dbReference type="eggNOG" id="KOG2866">
    <property type="taxonomic scope" value="Eukaryota"/>
</dbReference>
<dbReference type="HOGENOM" id="CLU_041037_1_0_1"/>
<dbReference type="InParanoid" id="Q6BDR8"/>
<dbReference type="OMA" id="FMGINRT"/>
<dbReference type="PhylomeDB" id="Q6BDR8"/>
<dbReference type="Reactome" id="R-SPO-3108214">
    <property type="pathway name" value="SUMOylation of DNA damage response and repair proteins"/>
</dbReference>
<dbReference type="PRO" id="PR:Q6BDR8"/>
<dbReference type="Proteomes" id="UP000002485">
    <property type="component" value="Chromosome II"/>
</dbReference>
<dbReference type="GO" id="GO:0061638">
    <property type="term" value="C:CENP-A containing chromatin"/>
    <property type="evidence" value="ECO:0000314"/>
    <property type="project" value="PomBase"/>
</dbReference>
<dbReference type="GO" id="GO:0099115">
    <property type="term" value="C:chromosome, subtelomeric region"/>
    <property type="evidence" value="ECO:0000314"/>
    <property type="project" value="PomBase"/>
</dbReference>
<dbReference type="GO" id="GO:0005634">
    <property type="term" value="C:nucleus"/>
    <property type="evidence" value="ECO:0000314"/>
    <property type="project" value="PomBase"/>
</dbReference>
<dbReference type="GO" id="GO:0005721">
    <property type="term" value="C:pericentric heterochromatin"/>
    <property type="evidence" value="ECO:0000314"/>
    <property type="project" value="PomBase"/>
</dbReference>
<dbReference type="GO" id="GO:0033553">
    <property type="term" value="C:rDNA heterochromatin"/>
    <property type="evidence" value="ECO:0000314"/>
    <property type="project" value="PomBase"/>
</dbReference>
<dbReference type="GO" id="GO:0030915">
    <property type="term" value="C:Smc5-Smc6 complex"/>
    <property type="evidence" value="ECO:0000314"/>
    <property type="project" value="PomBase"/>
</dbReference>
<dbReference type="GO" id="GO:0006281">
    <property type="term" value="P:DNA repair"/>
    <property type="evidence" value="ECO:0000318"/>
    <property type="project" value="GO_Central"/>
</dbReference>
<dbReference type="GO" id="GO:0000724">
    <property type="term" value="P:double-strand break repair via homologous recombination"/>
    <property type="evidence" value="ECO:0000305"/>
    <property type="project" value="PomBase"/>
</dbReference>
<dbReference type="GO" id="GO:0051321">
    <property type="term" value="P:meiotic cell cycle"/>
    <property type="evidence" value="ECO:0007669"/>
    <property type="project" value="UniProtKB-KW"/>
</dbReference>
<dbReference type="InterPro" id="IPR027786">
    <property type="entry name" value="Nse4/EID"/>
</dbReference>
<dbReference type="InterPro" id="IPR014854">
    <property type="entry name" value="Nse4_C"/>
</dbReference>
<dbReference type="PANTHER" id="PTHR16140">
    <property type="entry name" value="NON-STRUCTURAL MAINTENANCE OF CHROMOSOMES ELEMENT 4"/>
    <property type="match status" value="1"/>
</dbReference>
<dbReference type="PANTHER" id="PTHR16140:SF0">
    <property type="entry name" value="NON-STRUCTURAL MAINTENANCE OF CHROMOSOMES ELEMENT 4"/>
    <property type="match status" value="1"/>
</dbReference>
<dbReference type="Pfam" id="PF08743">
    <property type="entry name" value="Nse4_C"/>
    <property type="match status" value="1"/>
</dbReference>
<organism>
    <name type="scientific">Schizosaccharomyces pombe (strain 972 / ATCC 24843)</name>
    <name type="common">Fission yeast</name>
    <dbReference type="NCBI Taxonomy" id="284812"/>
    <lineage>
        <taxon>Eukaryota</taxon>
        <taxon>Fungi</taxon>
        <taxon>Dikarya</taxon>
        <taxon>Ascomycota</taxon>
        <taxon>Taphrinomycotina</taxon>
        <taxon>Schizosaccharomycetes</taxon>
        <taxon>Schizosaccharomycetales</taxon>
        <taxon>Schizosaccharomycetaceae</taxon>
        <taxon>Schizosaccharomyces</taxon>
    </lineage>
</organism>
<sequence>MSSIDKRDLRKRYRNLINKVQESRLELVDEENNNLYETITTANDLFSSVDAPTEATLDALLLTKTVDLASIKARQLHIGRPKFNIELFTKNIKQFLNYPTSHSNVTRIQEIDTAWSRLGKLASNCEKQPASLNLMVGPLSFRKKERNIQRRERLQKAPNVLTQPTMLNERNITTQENNTTKNVLHISRLLQAHQPVNFLKFITNPQSYPQTVENLFYVSFLFKEGKAALVENESGILMLETRIPPTDDQVVAGEIRNIQLVLDMTMDLYENIIKEYNIKESIIPTRAPVETSTNSNTWYG</sequence>
<reference key="1">
    <citation type="journal article" date="2004" name="Mol. Cell. Biol.">
        <title>Rad62 protein functionally and physically associates with the smc5/smc6 protein complex and is required for chromosome integrity and recombination repair in fission yeast.</title>
        <authorList>
            <person name="Morikawa H."/>
            <person name="Morishita T."/>
            <person name="Kawane S."/>
            <person name="Iwasaki H."/>
            <person name="Carr A.M."/>
            <person name="Shinagawa H."/>
        </authorList>
    </citation>
    <scope>NUCLEOTIDE SEQUENCE [GENOMIC DNA]</scope>
    <scope>FUNCTION</scope>
    <scope>INTERACTION WITH THE SMC5-SMC6 COMPLEX</scope>
    <scope>SUBCELLULAR LOCATION</scope>
</reference>
<reference key="2">
    <citation type="journal article" date="2002" name="Nature">
        <title>The genome sequence of Schizosaccharomyces pombe.</title>
        <authorList>
            <person name="Wood V."/>
            <person name="Gwilliam R."/>
            <person name="Rajandream M.A."/>
            <person name="Lyne M.H."/>
            <person name="Lyne R."/>
            <person name="Stewart A."/>
            <person name="Sgouros J.G."/>
            <person name="Peat N."/>
            <person name="Hayles J."/>
            <person name="Baker S.G."/>
            <person name="Basham D."/>
            <person name="Bowman S."/>
            <person name="Brooks K."/>
            <person name="Brown D."/>
            <person name="Brown S."/>
            <person name="Chillingworth T."/>
            <person name="Churcher C.M."/>
            <person name="Collins M."/>
            <person name="Connor R."/>
            <person name="Cronin A."/>
            <person name="Davis P."/>
            <person name="Feltwell T."/>
            <person name="Fraser A."/>
            <person name="Gentles S."/>
            <person name="Goble A."/>
            <person name="Hamlin N."/>
            <person name="Harris D.E."/>
            <person name="Hidalgo J."/>
            <person name="Hodgson G."/>
            <person name="Holroyd S."/>
            <person name="Hornsby T."/>
            <person name="Howarth S."/>
            <person name="Huckle E.J."/>
            <person name="Hunt S."/>
            <person name="Jagels K."/>
            <person name="James K.D."/>
            <person name="Jones L."/>
            <person name="Jones M."/>
            <person name="Leather S."/>
            <person name="McDonald S."/>
            <person name="McLean J."/>
            <person name="Mooney P."/>
            <person name="Moule S."/>
            <person name="Mungall K.L."/>
            <person name="Murphy L.D."/>
            <person name="Niblett D."/>
            <person name="Odell C."/>
            <person name="Oliver K."/>
            <person name="O'Neil S."/>
            <person name="Pearson D."/>
            <person name="Quail M.A."/>
            <person name="Rabbinowitsch E."/>
            <person name="Rutherford K.M."/>
            <person name="Rutter S."/>
            <person name="Saunders D."/>
            <person name="Seeger K."/>
            <person name="Sharp S."/>
            <person name="Skelton J."/>
            <person name="Simmonds M.N."/>
            <person name="Squares R."/>
            <person name="Squares S."/>
            <person name="Stevens K."/>
            <person name="Taylor K."/>
            <person name="Taylor R.G."/>
            <person name="Tivey A."/>
            <person name="Walsh S.V."/>
            <person name="Warren T."/>
            <person name="Whitehead S."/>
            <person name="Woodward J.R."/>
            <person name="Volckaert G."/>
            <person name="Aert R."/>
            <person name="Robben J."/>
            <person name="Grymonprez B."/>
            <person name="Weltjens I."/>
            <person name="Vanstreels E."/>
            <person name="Rieger M."/>
            <person name="Schaefer M."/>
            <person name="Mueller-Auer S."/>
            <person name="Gabel C."/>
            <person name="Fuchs M."/>
            <person name="Duesterhoeft A."/>
            <person name="Fritzc C."/>
            <person name="Holzer E."/>
            <person name="Moestl D."/>
            <person name="Hilbert H."/>
            <person name="Borzym K."/>
            <person name="Langer I."/>
            <person name="Beck A."/>
            <person name="Lehrach H."/>
            <person name="Reinhardt R."/>
            <person name="Pohl T.M."/>
            <person name="Eger P."/>
            <person name="Zimmermann W."/>
            <person name="Wedler H."/>
            <person name="Wambutt R."/>
            <person name="Purnelle B."/>
            <person name="Goffeau A."/>
            <person name="Cadieu E."/>
            <person name="Dreano S."/>
            <person name="Gloux S."/>
            <person name="Lelaure V."/>
            <person name="Mottier S."/>
            <person name="Galibert F."/>
            <person name="Aves S.J."/>
            <person name="Xiang Z."/>
            <person name="Hunt C."/>
            <person name="Moore K."/>
            <person name="Hurst S.M."/>
            <person name="Lucas M."/>
            <person name="Rochet M."/>
            <person name="Gaillardin C."/>
            <person name="Tallada V.A."/>
            <person name="Garzon A."/>
            <person name="Thode G."/>
            <person name="Daga R.R."/>
            <person name="Cruzado L."/>
            <person name="Jimenez J."/>
            <person name="Sanchez M."/>
            <person name="del Rey F."/>
            <person name="Benito J."/>
            <person name="Dominguez A."/>
            <person name="Revuelta J.L."/>
            <person name="Moreno S."/>
            <person name="Armstrong J."/>
            <person name="Forsburg S.L."/>
            <person name="Cerutti L."/>
            <person name="Lowe T."/>
            <person name="McCombie W.R."/>
            <person name="Paulsen I."/>
            <person name="Potashkin J."/>
            <person name="Shpakovski G.V."/>
            <person name="Ussery D."/>
            <person name="Barrell B.G."/>
            <person name="Nurse P."/>
        </authorList>
    </citation>
    <scope>NUCLEOTIDE SEQUENCE [LARGE SCALE GENOMIC DNA]</scope>
    <source>
        <strain>972 / ATCC 24843</strain>
    </source>
</reference>
<reference key="3">
    <citation type="journal article" date="2004" name="Mol. Biol. Cell">
        <title>Nse1, Nse2, and a novel subunit of the Smc5-Smc6 complex, Nse3, play a crucial role in meiosis.</title>
        <authorList>
            <person name="Pebernard S."/>
            <person name="McDonald W.H."/>
            <person name="Pavlova Y."/>
            <person name="Yates J.R. III"/>
            <person name="Boddy M.N."/>
        </authorList>
    </citation>
    <scope>PARTIAL PROTEIN SEQUENCE</scope>
    <scope>INTERACTION WITH NSE1 AND SMC5</scope>
</reference>
<reference key="4">
    <citation type="journal article" date="2006" name="Mol. Cell. Biol.">
        <title>The Nse5-Nse6 dimer mediates DNA repair roles of the Smc5-Smc6 complex.</title>
        <authorList>
            <person name="Pebernard S."/>
            <person name="Wohlschlegel J."/>
            <person name="McDonald W.H."/>
            <person name="Yates J.R. III"/>
            <person name="Boddy M.N."/>
        </authorList>
    </citation>
    <scope>PARTIAL PROTEIN SEQUENCE</scope>
    <scope>IDENTIFICATION BY MASS SPECTROMETRY</scope>
</reference>
<reference key="5">
    <citation type="journal article" date="2005" name="Mol. Cell. Biol.">
        <title>Composition and architecture of the Schizosaccharomyces pombe Rad18 (Smc5-6) complex.</title>
        <authorList>
            <person name="Sergeant J."/>
            <person name="Taylor E."/>
            <person name="Palecek J."/>
            <person name="Fousteri M."/>
            <person name="Andrews E.A."/>
            <person name="Sweeney S."/>
            <person name="Shinagawa H."/>
            <person name="Watts F.Z."/>
            <person name="Lehmann A.R."/>
        </authorList>
    </citation>
    <scope>INTERACTION WITH NSE3</scope>
</reference>
<feature type="chain" id="PRO_0000214099" description="Non-structural maintenance of chromosome element 4">
    <location>
        <begin position="1"/>
        <end position="300"/>
    </location>
</feature>
<protein>
    <recommendedName>
        <fullName>Non-structural maintenance of chromosome element 4</fullName>
        <shortName>Non-SMC element 4</shortName>
    </recommendedName>
    <alternativeName>
        <fullName>DNA repair protein rad62</fullName>
    </alternativeName>
</protein>